<keyword id="KW-0325">Glycoprotein</keyword>
<keyword id="KW-0426">Late protein</keyword>
<keyword id="KW-0946">Virion</keyword>
<comment type="subcellular location">
    <subcellularLocation>
        <location evidence="1">Virion</location>
    </subcellularLocation>
</comment>
<comment type="induction">
    <text evidence="3">Expressed in the late phase of the viral replicative cycle.</text>
</comment>
<comment type="similarity">
    <text evidence="3">Belongs to the asfivirus I177L family.</text>
</comment>
<name>VF177_ASFK5</name>
<gene>
    <name type="ordered locus">Ken-156</name>
</gene>
<organismHost>
    <name type="scientific">Ornithodoros</name>
    <name type="common">relapsing fever ticks</name>
    <dbReference type="NCBI Taxonomy" id="6937"/>
</organismHost>
<organismHost>
    <name type="scientific">Phacochoerus aethiopicus</name>
    <name type="common">Warthog</name>
    <dbReference type="NCBI Taxonomy" id="85517"/>
</organismHost>
<organismHost>
    <name type="scientific">Phacochoerus africanus</name>
    <name type="common">Warthog</name>
    <dbReference type="NCBI Taxonomy" id="41426"/>
</organismHost>
<organismHost>
    <name type="scientific">Potamochoerus larvatus</name>
    <name type="common">Bushpig</name>
    <dbReference type="NCBI Taxonomy" id="273792"/>
</organismHost>
<organismHost>
    <name type="scientific">Sus scrofa</name>
    <name type="common">Pig</name>
    <dbReference type="NCBI Taxonomy" id="9823"/>
</organismHost>
<proteinExistence type="inferred from homology"/>
<evidence type="ECO:0000250" key="1">
    <source>
        <dbReference type="UniProtKB" id="P27942"/>
    </source>
</evidence>
<evidence type="ECO:0000255" key="2"/>
<evidence type="ECO:0000305" key="3"/>
<feature type="chain" id="PRO_0000373563" description="Protein I177L">
    <location>
        <begin position="1"/>
        <end position="51"/>
    </location>
</feature>
<feature type="glycosylation site" description="N-linked (GlcNAc...) asparagine; by host" evidence="2">
    <location>
        <position position="11"/>
    </location>
</feature>
<accession>P0CA80</accession>
<organism>
    <name type="scientific">African swine fever virus (isolate Pig/Kenya/KEN-50/1950)</name>
    <name type="common">ASFV</name>
    <dbReference type="NCBI Taxonomy" id="561445"/>
    <lineage>
        <taxon>Viruses</taxon>
        <taxon>Varidnaviria</taxon>
        <taxon>Bamfordvirae</taxon>
        <taxon>Nucleocytoviricota</taxon>
        <taxon>Pokkesviricetes</taxon>
        <taxon>Asfuvirales</taxon>
        <taxon>Asfarviridae</taxon>
        <taxon>Asfivirus</taxon>
        <taxon>African swine fever virus</taxon>
    </lineage>
</organism>
<dbReference type="EMBL" id="AY261360">
    <property type="status" value="NOT_ANNOTATED_CDS"/>
    <property type="molecule type" value="Genomic_DNA"/>
</dbReference>
<dbReference type="Proteomes" id="UP000000861">
    <property type="component" value="Segment"/>
</dbReference>
<dbReference type="GO" id="GO:0044423">
    <property type="term" value="C:virion component"/>
    <property type="evidence" value="ECO:0007669"/>
    <property type="project" value="UniProtKB-KW"/>
</dbReference>
<protein>
    <recommendedName>
        <fullName>Protein I177L</fullName>
    </recommendedName>
</protein>
<reference key="1">
    <citation type="submission" date="2003-03" db="EMBL/GenBank/DDBJ databases">
        <title>African swine fever virus genomes.</title>
        <authorList>
            <person name="Kutish G.F."/>
            <person name="Rock D.L."/>
        </authorList>
    </citation>
    <scope>NUCLEOTIDE SEQUENCE [LARGE SCALE GENOMIC DNA]</scope>
</reference>
<sequence>MWKVNDQGFLNITVAGTKFNLIATSTKIGFYTDPPSHLIIIPLKIFPLPPK</sequence>